<evidence type="ECO:0000255" key="1">
    <source>
        <dbReference type="HAMAP-Rule" id="MF_01080"/>
    </source>
</evidence>
<organism>
    <name type="scientific">Fusobacterium nucleatum subsp. nucleatum (strain ATCC 25586 / DSM 15643 / BCRC 10681 / CIP 101130 / JCM 8532 / KCTC 2640 / LMG 13131 / VPI 4355)</name>
    <dbReference type="NCBI Taxonomy" id="190304"/>
    <lineage>
        <taxon>Bacteria</taxon>
        <taxon>Fusobacteriati</taxon>
        <taxon>Fusobacteriota</taxon>
        <taxon>Fusobacteriia</taxon>
        <taxon>Fusobacteriales</taxon>
        <taxon>Fusobacteriaceae</taxon>
        <taxon>Fusobacterium</taxon>
    </lineage>
</organism>
<dbReference type="EC" id="5.4.99.25" evidence="1"/>
<dbReference type="EMBL" id="AE009951">
    <property type="protein sequence ID" value="AAL94831.1"/>
    <property type="molecule type" value="Genomic_DNA"/>
</dbReference>
<dbReference type="RefSeq" id="NP_603532.1">
    <property type="nucleotide sequence ID" value="NC_003454.1"/>
</dbReference>
<dbReference type="RefSeq" id="WP_011016546.1">
    <property type="nucleotide sequence ID" value="NZ_OZ209243.1"/>
</dbReference>
<dbReference type="SMR" id="Q8R5X8"/>
<dbReference type="FunCoup" id="Q8R5X8">
    <property type="interactions" value="306"/>
</dbReference>
<dbReference type="STRING" id="190304.FN0635"/>
<dbReference type="PaxDb" id="190304-FN0635"/>
<dbReference type="EnsemblBacteria" id="AAL94831">
    <property type="protein sequence ID" value="AAL94831"/>
    <property type="gene ID" value="FN0635"/>
</dbReference>
<dbReference type="GeneID" id="79783633"/>
<dbReference type="KEGG" id="fnu:FN0635"/>
<dbReference type="PATRIC" id="fig|190304.8.peg.1199"/>
<dbReference type="eggNOG" id="COG0130">
    <property type="taxonomic scope" value="Bacteria"/>
</dbReference>
<dbReference type="HOGENOM" id="CLU_032087_0_2_0"/>
<dbReference type="InParanoid" id="Q8R5X8"/>
<dbReference type="BioCyc" id="FNUC190304:G1FZS-1221-MONOMER"/>
<dbReference type="Proteomes" id="UP000002521">
    <property type="component" value="Chromosome"/>
</dbReference>
<dbReference type="GO" id="GO:0009982">
    <property type="term" value="F:pseudouridine synthase activity"/>
    <property type="evidence" value="ECO:0000318"/>
    <property type="project" value="GO_Central"/>
</dbReference>
<dbReference type="GO" id="GO:0003723">
    <property type="term" value="F:RNA binding"/>
    <property type="evidence" value="ECO:0007669"/>
    <property type="project" value="InterPro"/>
</dbReference>
<dbReference type="GO" id="GO:0160148">
    <property type="term" value="F:tRNA pseudouridine(55) synthase activity"/>
    <property type="evidence" value="ECO:0007669"/>
    <property type="project" value="UniProtKB-EC"/>
</dbReference>
<dbReference type="GO" id="GO:1990481">
    <property type="term" value="P:mRNA pseudouridine synthesis"/>
    <property type="evidence" value="ECO:0000318"/>
    <property type="project" value="GO_Central"/>
</dbReference>
<dbReference type="GO" id="GO:0006400">
    <property type="term" value="P:tRNA modification"/>
    <property type="evidence" value="ECO:0000318"/>
    <property type="project" value="GO_Central"/>
</dbReference>
<dbReference type="GO" id="GO:0031119">
    <property type="term" value="P:tRNA pseudouridine synthesis"/>
    <property type="evidence" value="ECO:0007669"/>
    <property type="project" value="UniProtKB-UniRule"/>
</dbReference>
<dbReference type="CDD" id="cd02573">
    <property type="entry name" value="PseudoU_synth_EcTruB"/>
    <property type="match status" value="1"/>
</dbReference>
<dbReference type="Gene3D" id="3.30.2350.10">
    <property type="entry name" value="Pseudouridine synthase"/>
    <property type="match status" value="1"/>
</dbReference>
<dbReference type="HAMAP" id="MF_01080">
    <property type="entry name" value="TruB_bact"/>
    <property type="match status" value="1"/>
</dbReference>
<dbReference type="InterPro" id="IPR020103">
    <property type="entry name" value="PsdUridine_synth_cat_dom_sf"/>
</dbReference>
<dbReference type="InterPro" id="IPR002501">
    <property type="entry name" value="PsdUridine_synth_N"/>
</dbReference>
<dbReference type="InterPro" id="IPR014780">
    <property type="entry name" value="tRNA_psdUridine_synth_TruB"/>
</dbReference>
<dbReference type="InterPro" id="IPR032819">
    <property type="entry name" value="TruB_C"/>
</dbReference>
<dbReference type="NCBIfam" id="TIGR00431">
    <property type="entry name" value="TruB"/>
    <property type="match status" value="1"/>
</dbReference>
<dbReference type="PANTHER" id="PTHR13767:SF2">
    <property type="entry name" value="PSEUDOURIDYLATE SYNTHASE TRUB1"/>
    <property type="match status" value="1"/>
</dbReference>
<dbReference type="PANTHER" id="PTHR13767">
    <property type="entry name" value="TRNA-PSEUDOURIDINE SYNTHASE"/>
    <property type="match status" value="1"/>
</dbReference>
<dbReference type="Pfam" id="PF16198">
    <property type="entry name" value="TruB_C_2"/>
    <property type="match status" value="1"/>
</dbReference>
<dbReference type="Pfam" id="PF01509">
    <property type="entry name" value="TruB_N"/>
    <property type="match status" value="1"/>
</dbReference>
<dbReference type="SUPFAM" id="SSF55120">
    <property type="entry name" value="Pseudouridine synthase"/>
    <property type="match status" value="1"/>
</dbReference>
<protein>
    <recommendedName>
        <fullName evidence="1">tRNA pseudouridine synthase B</fullName>
        <ecNumber evidence="1">5.4.99.25</ecNumber>
    </recommendedName>
    <alternativeName>
        <fullName evidence="1">tRNA pseudouridine(55) synthase</fullName>
        <shortName evidence="1">Psi55 synthase</shortName>
    </alternativeName>
    <alternativeName>
        <fullName evidence="1">tRNA pseudouridylate synthase</fullName>
    </alternativeName>
    <alternativeName>
        <fullName evidence="1">tRNA-uridine isomerase</fullName>
    </alternativeName>
</protein>
<name>TRUB_FUSNN</name>
<accession>Q8R5X8</accession>
<feature type="chain" id="PRO_0000121837" description="tRNA pseudouridine synthase B">
    <location>
        <begin position="1"/>
        <end position="287"/>
    </location>
</feature>
<feature type="active site" description="Nucleophile" evidence="1">
    <location>
        <position position="38"/>
    </location>
</feature>
<reference key="1">
    <citation type="journal article" date="2002" name="J. Bacteriol.">
        <title>Genome sequence and analysis of the oral bacterium Fusobacterium nucleatum strain ATCC 25586.</title>
        <authorList>
            <person name="Kapatral V."/>
            <person name="Anderson I."/>
            <person name="Ivanova N."/>
            <person name="Reznik G."/>
            <person name="Los T."/>
            <person name="Lykidis A."/>
            <person name="Bhattacharyya A."/>
            <person name="Bartman A."/>
            <person name="Gardner W."/>
            <person name="Grechkin G."/>
            <person name="Zhu L."/>
            <person name="Vasieva O."/>
            <person name="Chu L."/>
            <person name="Kogan Y."/>
            <person name="Chaga O."/>
            <person name="Goltsman E."/>
            <person name="Bernal A."/>
            <person name="Larsen N."/>
            <person name="D'Souza M."/>
            <person name="Walunas T."/>
            <person name="Pusch G."/>
            <person name="Haselkorn R."/>
            <person name="Fonstein M."/>
            <person name="Kyrpides N.C."/>
            <person name="Overbeek R."/>
        </authorList>
    </citation>
    <scope>NUCLEOTIDE SEQUENCE [LARGE SCALE GENOMIC DNA]</scope>
    <source>
        <strain>ATCC 25586 / DSM 15643 / BCRC 10681 / CIP 101130 / JCM 8532 / KCTC 2640 / LMG 13131 / VPI 4355</strain>
    </source>
</reference>
<proteinExistence type="inferred from homology"/>
<sequence>MEGIIVINKPKGITSFDVIRKLKKFLKTKKIGHTGTLDPLAIGVMLVCVGKATKLASDLEAKDKVYIADFDIGYATDTYDIEGKKIAENIIEVSKENLEQSLKKFIGNIKQVPPMYSAIKIDGNKLYHLARKGIEVERPERDITIEYINLLDFKDNKAKIETKVSKGCYIRSLIYDIGQDLGTYATMTALQRKQVGEYSLENSYSLEQIEEMTLNNNFKFLKTIEEIFSYDKYNLQTEKEFILYKNGNTVKIKENLENKKYRIYFQDEFIGLANIENNNLLKGYKYY</sequence>
<comment type="function">
    <text evidence="1">Responsible for synthesis of pseudouridine from uracil-55 in the psi GC loop of transfer RNAs.</text>
</comment>
<comment type="catalytic activity">
    <reaction evidence="1">
        <text>uridine(55) in tRNA = pseudouridine(55) in tRNA</text>
        <dbReference type="Rhea" id="RHEA:42532"/>
        <dbReference type="Rhea" id="RHEA-COMP:10101"/>
        <dbReference type="Rhea" id="RHEA-COMP:10102"/>
        <dbReference type="ChEBI" id="CHEBI:65314"/>
        <dbReference type="ChEBI" id="CHEBI:65315"/>
        <dbReference type="EC" id="5.4.99.25"/>
    </reaction>
</comment>
<comment type="similarity">
    <text evidence="1">Belongs to the pseudouridine synthase TruB family. Type 1 subfamily.</text>
</comment>
<keyword id="KW-0413">Isomerase</keyword>
<keyword id="KW-1185">Reference proteome</keyword>
<keyword id="KW-0819">tRNA processing</keyword>
<gene>
    <name evidence="1" type="primary">truB</name>
    <name type="ordered locus">FN0635</name>
</gene>